<gene>
    <name evidence="1" type="primary">recO</name>
    <name type="ordered locus">Acry_1209</name>
</gene>
<comment type="function">
    <text evidence="1">Involved in DNA repair and RecF pathway recombination.</text>
</comment>
<comment type="similarity">
    <text evidence="1">Belongs to the RecO family.</text>
</comment>
<name>RECO_ACICJ</name>
<evidence type="ECO:0000255" key="1">
    <source>
        <dbReference type="HAMAP-Rule" id="MF_00201"/>
    </source>
</evidence>
<feature type="chain" id="PRO_1000193344" description="DNA repair protein RecO">
    <location>
        <begin position="1"/>
        <end position="251"/>
    </location>
</feature>
<accession>A5FXT9</accession>
<protein>
    <recommendedName>
        <fullName evidence="1">DNA repair protein RecO</fullName>
    </recommendedName>
    <alternativeName>
        <fullName evidence="1">Recombination protein O</fullName>
    </alternativeName>
</protein>
<reference key="1">
    <citation type="submission" date="2007-05" db="EMBL/GenBank/DDBJ databases">
        <title>Complete sequence of chromosome of Acidiphilium cryptum JF-5.</title>
        <authorList>
            <consortium name="US DOE Joint Genome Institute"/>
            <person name="Copeland A."/>
            <person name="Lucas S."/>
            <person name="Lapidus A."/>
            <person name="Barry K."/>
            <person name="Detter J.C."/>
            <person name="Glavina del Rio T."/>
            <person name="Hammon N."/>
            <person name="Israni S."/>
            <person name="Dalin E."/>
            <person name="Tice H."/>
            <person name="Pitluck S."/>
            <person name="Sims D."/>
            <person name="Brettin T."/>
            <person name="Bruce D."/>
            <person name="Han C."/>
            <person name="Schmutz J."/>
            <person name="Larimer F."/>
            <person name="Land M."/>
            <person name="Hauser L."/>
            <person name="Kyrpides N."/>
            <person name="Kim E."/>
            <person name="Magnuson T."/>
            <person name="Richardson P."/>
        </authorList>
    </citation>
    <scope>NUCLEOTIDE SEQUENCE [LARGE SCALE GENOMIC DNA]</scope>
    <source>
        <strain>JF-5</strain>
    </source>
</reference>
<keyword id="KW-0227">DNA damage</keyword>
<keyword id="KW-0233">DNA recombination</keyword>
<keyword id="KW-0234">DNA repair</keyword>
<keyword id="KW-1185">Reference proteome</keyword>
<dbReference type="EMBL" id="CP000697">
    <property type="protein sequence ID" value="ABQ30421.1"/>
    <property type="molecule type" value="Genomic_DNA"/>
</dbReference>
<dbReference type="RefSeq" id="WP_011942077.1">
    <property type="nucleotide sequence ID" value="NC_009484.1"/>
</dbReference>
<dbReference type="SMR" id="A5FXT9"/>
<dbReference type="STRING" id="349163.Acry_1209"/>
<dbReference type="KEGG" id="acr:Acry_1209"/>
<dbReference type="eggNOG" id="COG1381">
    <property type="taxonomic scope" value="Bacteria"/>
</dbReference>
<dbReference type="HOGENOM" id="CLU_086029_0_0_5"/>
<dbReference type="Proteomes" id="UP000000245">
    <property type="component" value="Chromosome"/>
</dbReference>
<dbReference type="GO" id="GO:0043590">
    <property type="term" value="C:bacterial nucleoid"/>
    <property type="evidence" value="ECO:0007669"/>
    <property type="project" value="TreeGrafter"/>
</dbReference>
<dbReference type="GO" id="GO:0006310">
    <property type="term" value="P:DNA recombination"/>
    <property type="evidence" value="ECO:0007669"/>
    <property type="project" value="UniProtKB-UniRule"/>
</dbReference>
<dbReference type="GO" id="GO:0006302">
    <property type="term" value="P:double-strand break repair"/>
    <property type="evidence" value="ECO:0007669"/>
    <property type="project" value="TreeGrafter"/>
</dbReference>
<dbReference type="Gene3D" id="1.20.1440.120">
    <property type="entry name" value="Recombination protein O, C-terminal domain"/>
    <property type="match status" value="1"/>
</dbReference>
<dbReference type="HAMAP" id="MF_00201">
    <property type="entry name" value="RecO"/>
    <property type="match status" value="1"/>
</dbReference>
<dbReference type="InterPro" id="IPR037278">
    <property type="entry name" value="ARFGAP/RecO"/>
</dbReference>
<dbReference type="InterPro" id="IPR022572">
    <property type="entry name" value="DNA_rep/recomb_RecO_N"/>
</dbReference>
<dbReference type="InterPro" id="IPR003717">
    <property type="entry name" value="RecO"/>
</dbReference>
<dbReference type="InterPro" id="IPR042242">
    <property type="entry name" value="RecO_C"/>
</dbReference>
<dbReference type="NCBIfam" id="TIGR00613">
    <property type="entry name" value="reco"/>
    <property type="match status" value="1"/>
</dbReference>
<dbReference type="PANTHER" id="PTHR33991">
    <property type="entry name" value="DNA REPAIR PROTEIN RECO"/>
    <property type="match status" value="1"/>
</dbReference>
<dbReference type="PANTHER" id="PTHR33991:SF1">
    <property type="entry name" value="DNA REPAIR PROTEIN RECO"/>
    <property type="match status" value="1"/>
</dbReference>
<dbReference type="Pfam" id="PF02565">
    <property type="entry name" value="RecO_C"/>
    <property type="match status" value="1"/>
</dbReference>
<dbReference type="Pfam" id="PF11967">
    <property type="entry name" value="RecO_N"/>
    <property type="match status" value="1"/>
</dbReference>
<dbReference type="SUPFAM" id="SSF57863">
    <property type="entry name" value="ArfGap/RecO-like zinc finger"/>
    <property type="match status" value="1"/>
</dbReference>
<proteinExistence type="inferred from homology"/>
<organism>
    <name type="scientific">Acidiphilium cryptum (strain JF-5)</name>
    <dbReference type="NCBI Taxonomy" id="349163"/>
    <lineage>
        <taxon>Bacteria</taxon>
        <taxon>Pseudomonadati</taxon>
        <taxon>Pseudomonadota</taxon>
        <taxon>Alphaproteobacteria</taxon>
        <taxon>Acetobacterales</taxon>
        <taxon>Acidocellaceae</taxon>
        <taxon>Acidiphilium</taxon>
    </lineage>
</organism>
<sequence length="251" mass="26440">MEWSEPAIVLSVAAFGESDLRTIVLAETHGAWHGLARGGAGRRGAPIWQEGNLINARWVARLPEQLGSISGELVHPAAAIAMADPLALAVLRAACAVAAGALPEREAHRGAFIRLARLLGGIGIAGTALPALVRFELELLRELGYGLDLSSCALSGAAEDLAFVSPRTGRAVARGAAGDWVPRLLKLPAFLLDEDAADDKADLAACRDGLALTGHFLARDAFGARHAPLPTARLDLYDRLTRRLNGDDDAR</sequence>